<name>KATG2_CELJU</name>
<feature type="signal peptide" evidence="1">
    <location>
        <begin position="1"/>
        <end position="27"/>
    </location>
</feature>
<feature type="chain" id="PRO_0000354756" description="Catalase-peroxidase 2">
    <location>
        <begin position="28"/>
        <end position="740"/>
    </location>
</feature>
<feature type="active site" description="Proton acceptor" evidence="1">
    <location>
        <position position="107"/>
    </location>
</feature>
<feature type="binding site" description="axial binding residue" evidence="1">
    <location>
        <position position="269"/>
    </location>
    <ligand>
        <name>heme b</name>
        <dbReference type="ChEBI" id="CHEBI:60344"/>
    </ligand>
    <ligandPart>
        <name>Fe</name>
        <dbReference type="ChEBI" id="CHEBI:18248"/>
    </ligandPart>
</feature>
<feature type="site" description="Transition state stabilizer" evidence="1">
    <location>
        <position position="103"/>
    </location>
</feature>
<feature type="cross-link" description="Tryptophyl-tyrosyl-methioninium (Trp-Tyr) (with M-254)" evidence="1">
    <location>
        <begin position="106"/>
        <end position="228"/>
    </location>
</feature>
<feature type="cross-link" description="Tryptophyl-tyrosyl-methioninium (Tyr-Met) (with W-106)" evidence="1">
    <location>
        <begin position="228"/>
        <end position="254"/>
    </location>
</feature>
<proteinExistence type="inferred from homology"/>
<dbReference type="EC" id="1.11.1.21" evidence="1"/>
<dbReference type="EMBL" id="CP000934">
    <property type="protein sequence ID" value="ACE85973.1"/>
    <property type="molecule type" value="Genomic_DNA"/>
</dbReference>
<dbReference type="RefSeq" id="WP_012485709.1">
    <property type="nucleotide sequence ID" value="NC_010995.1"/>
</dbReference>
<dbReference type="SMR" id="B3PEP6"/>
<dbReference type="STRING" id="498211.CJA_0025"/>
<dbReference type="KEGG" id="cja:CJA_0025"/>
<dbReference type="eggNOG" id="COG0376">
    <property type="taxonomic scope" value="Bacteria"/>
</dbReference>
<dbReference type="HOGENOM" id="CLU_025424_2_0_6"/>
<dbReference type="OrthoDB" id="9759743at2"/>
<dbReference type="Proteomes" id="UP000001036">
    <property type="component" value="Chromosome"/>
</dbReference>
<dbReference type="GO" id="GO:0005829">
    <property type="term" value="C:cytosol"/>
    <property type="evidence" value="ECO:0007669"/>
    <property type="project" value="TreeGrafter"/>
</dbReference>
<dbReference type="GO" id="GO:0004096">
    <property type="term" value="F:catalase activity"/>
    <property type="evidence" value="ECO:0007669"/>
    <property type="project" value="UniProtKB-UniRule"/>
</dbReference>
<dbReference type="GO" id="GO:0020037">
    <property type="term" value="F:heme binding"/>
    <property type="evidence" value="ECO:0007669"/>
    <property type="project" value="InterPro"/>
</dbReference>
<dbReference type="GO" id="GO:0046872">
    <property type="term" value="F:metal ion binding"/>
    <property type="evidence" value="ECO:0007669"/>
    <property type="project" value="UniProtKB-KW"/>
</dbReference>
<dbReference type="GO" id="GO:0070301">
    <property type="term" value="P:cellular response to hydrogen peroxide"/>
    <property type="evidence" value="ECO:0007669"/>
    <property type="project" value="TreeGrafter"/>
</dbReference>
<dbReference type="GO" id="GO:0042744">
    <property type="term" value="P:hydrogen peroxide catabolic process"/>
    <property type="evidence" value="ECO:0007669"/>
    <property type="project" value="UniProtKB-KW"/>
</dbReference>
<dbReference type="CDD" id="cd00649">
    <property type="entry name" value="catalase_peroxidase_1"/>
    <property type="match status" value="1"/>
</dbReference>
<dbReference type="CDD" id="cd08200">
    <property type="entry name" value="catalase_peroxidase_2"/>
    <property type="match status" value="1"/>
</dbReference>
<dbReference type="FunFam" id="1.10.420.10:FF:000002">
    <property type="entry name" value="Catalase-peroxidase"/>
    <property type="match status" value="1"/>
</dbReference>
<dbReference type="FunFam" id="1.10.420.10:FF:000004">
    <property type="entry name" value="Catalase-peroxidase"/>
    <property type="match status" value="1"/>
</dbReference>
<dbReference type="FunFam" id="1.10.520.10:FF:000002">
    <property type="entry name" value="Catalase-peroxidase"/>
    <property type="match status" value="1"/>
</dbReference>
<dbReference type="Gene3D" id="1.10.520.10">
    <property type="match status" value="2"/>
</dbReference>
<dbReference type="Gene3D" id="1.10.420.10">
    <property type="entry name" value="Peroxidase, domain 2"/>
    <property type="match status" value="2"/>
</dbReference>
<dbReference type="HAMAP" id="MF_01961">
    <property type="entry name" value="Catal_peroxid"/>
    <property type="match status" value="1"/>
</dbReference>
<dbReference type="InterPro" id="IPR000763">
    <property type="entry name" value="Catalase_peroxidase"/>
</dbReference>
<dbReference type="InterPro" id="IPR002016">
    <property type="entry name" value="Haem_peroxidase"/>
</dbReference>
<dbReference type="InterPro" id="IPR010255">
    <property type="entry name" value="Haem_peroxidase_sf"/>
</dbReference>
<dbReference type="InterPro" id="IPR019794">
    <property type="entry name" value="Peroxidases_AS"/>
</dbReference>
<dbReference type="InterPro" id="IPR019793">
    <property type="entry name" value="Peroxidases_heam-ligand_BS"/>
</dbReference>
<dbReference type="NCBIfam" id="TIGR00198">
    <property type="entry name" value="cat_per_HPI"/>
    <property type="match status" value="1"/>
</dbReference>
<dbReference type="NCBIfam" id="NF011635">
    <property type="entry name" value="PRK15061.1"/>
    <property type="match status" value="1"/>
</dbReference>
<dbReference type="PANTHER" id="PTHR30555:SF0">
    <property type="entry name" value="CATALASE-PEROXIDASE"/>
    <property type="match status" value="1"/>
</dbReference>
<dbReference type="PANTHER" id="PTHR30555">
    <property type="entry name" value="HYDROPEROXIDASE I, BIFUNCTIONAL CATALASE-PEROXIDASE"/>
    <property type="match status" value="1"/>
</dbReference>
<dbReference type="Pfam" id="PF00141">
    <property type="entry name" value="peroxidase"/>
    <property type="match status" value="2"/>
</dbReference>
<dbReference type="PRINTS" id="PR00460">
    <property type="entry name" value="BPEROXIDASE"/>
</dbReference>
<dbReference type="PRINTS" id="PR00458">
    <property type="entry name" value="PEROXIDASE"/>
</dbReference>
<dbReference type="SUPFAM" id="SSF48113">
    <property type="entry name" value="Heme-dependent peroxidases"/>
    <property type="match status" value="2"/>
</dbReference>
<dbReference type="PROSITE" id="PS00435">
    <property type="entry name" value="PEROXIDASE_1"/>
    <property type="match status" value="1"/>
</dbReference>
<dbReference type="PROSITE" id="PS00436">
    <property type="entry name" value="PEROXIDASE_2"/>
    <property type="match status" value="1"/>
</dbReference>
<dbReference type="PROSITE" id="PS50873">
    <property type="entry name" value="PEROXIDASE_4"/>
    <property type="match status" value="1"/>
</dbReference>
<protein>
    <recommendedName>
        <fullName evidence="1">Catalase-peroxidase 2</fullName>
        <shortName evidence="1">CP 2</shortName>
        <ecNumber evidence="1">1.11.1.21</ecNumber>
    </recommendedName>
    <alternativeName>
        <fullName evidence="1">Peroxidase/catalase 2</fullName>
    </alternativeName>
</protein>
<keyword id="KW-0349">Heme</keyword>
<keyword id="KW-0376">Hydrogen peroxide</keyword>
<keyword id="KW-0408">Iron</keyword>
<keyword id="KW-0479">Metal-binding</keyword>
<keyword id="KW-0560">Oxidoreductase</keyword>
<keyword id="KW-0575">Peroxidase</keyword>
<keyword id="KW-1185">Reference proteome</keyword>
<keyword id="KW-0732">Signal</keyword>
<accession>B3PEP6</accession>
<gene>
    <name evidence="1" type="primary">katG2</name>
    <name type="ordered locus">CJA_0025</name>
</gene>
<evidence type="ECO:0000255" key="1">
    <source>
        <dbReference type="HAMAP-Rule" id="MF_01961"/>
    </source>
</evidence>
<reference key="1">
    <citation type="journal article" date="2008" name="J. Bacteriol.">
        <title>Insights into plant cell wall degradation from the genome sequence of the soil bacterium Cellvibrio japonicus.</title>
        <authorList>
            <person name="DeBoy R.T."/>
            <person name="Mongodin E.F."/>
            <person name="Fouts D.E."/>
            <person name="Tailford L.E."/>
            <person name="Khouri H."/>
            <person name="Emerson J.B."/>
            <person name="Mohamoud Y."/>
            <person name="Watkins K."/>
            <person name="Henrissat B."/>
            <person name="Gilbert H.J."/>
            <person name="Nelson K.E."/>
        </authorList>
    </citation>
    <scope>NUCLEOTIDE SEQUENCE [LARGE SCALE GENOMIC DNA]</scope>
    <source>
        <strain>Ueda107</strain>
    </source>
</reference>
<organism>
    <name type="scientific">Cellvibrio japonicus (strain Ueda107)</name>
    <name type="common">Pseudomonas fluorescens subsp. cellulosa</name>
    <dbReference type="NCBI Taxonomy" id="498211"/>
    <lineage>
        <taxon>Bacteria</taxon>
        <taxon>Pseudomonadati</taxon>
        <taxon>Pseudomonadota</taxon>
        <taxon>Gammaproteobacteria</taxon>
        <taxon>Cellvibrionales</taxon>
        <taxon>Cellvibrionaceae</taxon>
        <taxon>Cellvibrio</taxon>
    </lineage>
</organism>
<sequence>MFKKTKPRISILALTISCAIYSGAALAQDAANSNKFWWPEQLNLSPLRQHGVESNPMGSTFNYAQAFKKLDLNAVKADIKALMTQSQDWWPADYGHYGPFFIRMAWHSAGTYRIYDGRGGAGGGQQRFEPLNSWPDNVNLDRARRLLWPIKQKYGSSISWADLMVLTGNVALESMGFKTFGFAGGRQDDWEADTVYWGPEKKWLDDKRYSGDRTLEKPLAAVQMGLIYVNPEGPNGVPDPLLAAKDIRDTFGRMAMNDEETVALIAGGHTFGKAHGAHKPETCLGKEPAAAGIEEQGLGWTNKCGKGNAEDTITSGLEGAWSVNPIAWTTQYLDNLFAFEWVQVRSPAGAVQWIPKDGQAANLVPDAHDKTKRHAPIMFTTDLALKEDPEYRKISLRFKENPKEFELAFAKAWFKLTHRDMGPRVRYLGNEVPGEILLWQDPVPEVDHPLIDAADITKLKSSLLSSGLSSAELVRTAWAAAASFRGTDLRGGANGARIRLAPQNTWAVNNPRELNRALTRLEKVQGDFNKASTGGKKVSLADVIVLGGVAAVEQAAKKAGYAVEVPFIPGRTDASQAQTDVTSFAVLEPTADGFRNYYAKDNTLPPTDMLVERANLLTLTVPEMTVLVGGLRVLGANSDAAKNGIFTDKPGTLSNDFFINLLDMSTQWRKSAKTGGLYEGLDRKTGKLKWTATPVDLIFGSHSELRAVAEVYAANDGQEKFVNDFVKAWHKVMMLDRFDW</sequence>
<comment type="function">
    <text evidence="1">Bifunctional enzyme with both catalase and broad-spectrum peroxidase activity.</text>
</comment>
<comment type="catalytic activity">
    <reaction evidence="1">
        <text>H2O2 + AH2 = A + 2 H2O</text>
        <dbReference type="Rhea" id="RHEA:30275"/>
        <dbReference type="ChEBI" id="CHEBI:13193"/>
        <dbReference type="ChEBI" id="CHEBI:15377"/>
        <dbReference type="ChEBI" id="CHEBI:16240"/>
        <dbReference type="ChEBI" id="CHEBI:17499"/>
        <dbReference type="EC" id="1.11.1.21"/>
    </reaction>
</comment>
<comment type="catalytic activity">
    <reaction evidence="1">
        <text>2 H2O2 = O2 + 2 H2O</text>
        <dbReference type="Rhea" id="RHEA:20309"/>
        <dbReference type="ChEBI" id="CHEBI:15377"/>
        <dbReference type="ChEBI" id="CHEBI:15379"/>
        <dbReference type="ChEBI" id="CHEBI:16240"/>
        <dbReference type="EC" id="1.11.1.21"/>
    </reaction>
</comment>
<comment type="cofactor">
    <cofactor evidence="1">
        <name>heme b</name>
        <dbReference type="ChEBI" id="CHEBI:60344"/>
    </cofactor>
    <text evidence="1">Binds 1 heme b (iron(II)-protoporphyrin IX) group per dimer.</text>
</comment>
<comment type="subunit">
    <text evidence="1">Homodimer or homotetramer.</text>
</comment>
<comment type="PTM">
    <text evidence="1">Formation of the three residue Trp-Tyr-Met cross-link is important for the catalase, but not the peroxidase activity of the enzyme.</text>
</comment>
<comment type="similarity">
    <text evidence="1">Belongs to the peroxidase family. Peroxidase/catalase subfamily.</text>
</comment>